<reference key="1">
    <citation type="journal article" date="1985" name="Eur. J. Biochem.">
        <title>The primary structure of the iron-sulfur subunit of ubiquinol-cytochrome c reductase from Neurospora, determined by cDNA and gene sequencing.</title>
        <authorList>
            <person name="Harnisch U."/>
            <person name="Weiss H."/>
            <person name="Sebald W."/>
        </authorList>
    </citation>
    <scope>NUCLEOTIDE SEQUENCE [GENOMIC DNA]</scope>
    <scope>PROTEIN SEQUENCE OF 33-56</scope>
</reference>
<reference key="2">
    <citation type="journal article" date="2003" name="Nature">
        <title>The genome sequence of the filamentous fungus Neurospora crassa.</title>
        <authorList>
            <person name="Galagan J.E."/>
            <person name="Calvo S.E."/>
            <person name="Borkovich K.A."/>
            <person name="Selker E.U."/>
            <person name="Read N.D."/>
            <person name="Jaffe D.B."/>
            <person name="FitzHugh W."/>
            <person name="Ma L.-J."/>
            <person name="Smirnov S."/>
            <person name="Purcell S."/>
            <person name="Rehman B."/>
            <person name="Elkins T."/>
            <person name="Engels R."/>
            <person name="Wang S."/>
            <person name="Nielsen C.B."/>
            <person name="Butler J."/>
            <person name="Endrizzi M."/>
            <person name="Qui D."/>
            <person name="Ianakiev P."/>
            <person name="Bell-Pedersen D."/>
            <person name="Nelson M.A."/>
            <person name="Werner-Washburne M."/>
            <person name="Selitrennikoff C.P."/>
            <person name="Kinsey J.A."/>
            <person name="Braun E.L."/>
            <person name="Zelter A."/>
            <person name="Schulte U."/>
            <person name="Kothe G.O."/>
            <person name="Jedd G."/>
            <person name="Mewes H.-W."/>
            <person name="Staben C."/>
            <person name="Marcotte E."/>
            <person name="Greenberg D."/>
            <person name="Roy A."/>
            <person name="Foley K."/>
            <person name="Naylor J."/>
            <person name="Stange-Thomann N."/>
            <person name="Barrett R."/>
            <person name="Gnerre S."/>
            <person name="Kamal M."/>
            <person name="Kamvysselis M."/>
            <person name="Mauceli E.W."/>
            <person name="Bielke C."/>
            <person name="Rudd S."/>
            <person name="Frishman D."/>
            <person name="Krystofova S."/>
            <person name="Rasmussen C."/>
            <person name="Metzenberg R.L."/>
            <person name="Perkins D.D."/>
            <person name="Kroken S."/>
            <person name="Cogoni C."/>
            <person name="Macino G."/>
            <person name="Catcheside D.E.A."/>
            <person name="Li W."/>
            <person name="Pratt R.J."/>
            <person name="Osmani S.A."/>
            <person name="DeSouza C.P.C."/>
            <person name="Glass N.L."/>
            <person name="Orbach M.J."/>
            <person name="Berglund J.A."/>
            <person name="Voelker R."/>
            <person name="Yarden O."/>
            <person name="Plamann M."/>
            <person name="Seiler S."/>
            <person name="Dunlap J.C."/>
            <person name="Radford A."/>
            <person name="Aramayo R."/>
            <person name="Natvig D.O."/>
            <person name="Alex L.A."/>
            <person name="Mannhaupt G."/>
            <person name="Ebbole D.J."/>
            <person name="Freitag M."/>
            <person name="Paulsen I."/>
            <person name="Sachs M.S."/>
            <person name="Lander E.S."/>
            <person name="Nusbaum C."/>
            <person name="Birren B.W."/>
        </authorList>
    </citation>
    <scope>NUCLEOTIDE SEQUENCE [LARGE SCALE GENOMIC DNA]</scope>
    <source>
        <strain>ATCC 24698 / 74-OR23-1A / CBS 708.71 / DSM 1257 / FGSC 987</strain>
    </source>
</reference>
<reference key="3">
    <citation type="journal article" date="1986" name="Cell">
        <title>Transport into mitochondria and intramitochondrial sorting of the Fe/S protein of ubiquinol-cytochrome c reductase.</title>
        <authorList>
            <person name="Hartl F.U."/>
            <person name="Schmidt B."/>
            <person name="Wachter E."/>
            <person name="Weiss H."/>
            <person name="Neupert W."/>
        </authorList>
    </citation>
    <scope>PROTEIN SEQUENCE OF 25-57</scope>
</reference>
<reference key="4">
    <citation type="journal article" date="1979" name="Eur. J. Biochem.">
        <title>Isolation of mitochondrial succinate: ubiquinone reductase, cytochrome c reductase and cytochrome c oxidase from Neurospora crassa using nonionic detergent.</title>
        <authorList>
            <person name="Weiss H."/>
            <person name="Kolb H.J."/>
        </authorList>
    </citation>
    <scope>SUBUNIT</scope>
    <scope>SUBCELLULAR LOCATION</scope>
</reference>
<reference key="5">
    <citation type="journal article" date="1981" name="J. Mol. Biol.">
        <title>Three-dimensional structure of ubiquinol:cytochrome c reductase from Neurospora mitochondria determined by electron microscopy of membrane crystals.</title>
        <authorList>
            <person name="Leonard K."/>
            <person name="Wingfield P."/>
            <person name="Arad T."/>
            <person name="Weiss H."/>
        </authorList>
    </citation>
    <scope>SUBUNIT</scope>
</reference>
<reference key="6">
    <citation type="journal article" date="1983" name="J. Bioenerg. Biomembr.">
        <title>Comparative study of the peptide composition of Complex III (quinol-cytochrome c reductase).</title>
        <authorList>
            <person name="Mendel-Hartvig I."/>
            <person name="Nelson B.D."/>
        </authorList>
    </citation>
    <scope>SUBUNIT</scope>
</reference>
<reference key="7">
    <citation type="journal article" date="1983" name="J. Mol. Biol.">
        <title>Structural studies of cytochrome reductase. Subunit topography determined by electron microscopy of membrane crystals of a subcomplex.</title>
        <authorList>
            <person name="Karlsson B."/>
            <person name="Hovmoeller S."/>
            <person name="Weiss H."/>
            <person name="Leonard K."/>
        </authorList>
    </citation>
    <scope>SUBUNIT</scope>
</reference>
<reference key="8">
    <citation type="journal article" date="1986" name="Eur. J. Biochem.">
        <title>Dimeric ubiquinol:cytochrome c reductase of Neurospora mitochondria contains one cooperative ubiquinone-reduction centre.</title>
        <authorList>
            <person name="Linke P."/>
            <person name="Bechmann G."/>
            <person name="Gothe A."/>
            <person name="Weiss H."/>
        </authorList>
    </citation>
    <scope>FUNCTION</scope>
</reference>
<reference key="9">
    <citation type="journal article" date="1991" name="Eur. J. Biochem.">
        <title>Regulation of the proton/electron stoichiometry of mitochondrial ubiquinol:cytochrome c reductase by the membrane potential.</title>
        <authorList>
            <person name="Bechmann G."/>
            <person name="Weiss H."/>
        </authorList>
    </citation>
    <scope>FUNCTION OF COMPLEX III</scope>
</reference>
<reference key="10">
    <citation type="journal article" date="2007" name="Eukaryot. Cell">
        <title>Supramolecular organization of the respiratory chain in Neurospora crassa mitochondria.</title>
        <authorList>
            <person name="Marques I."/>
            <person name="Dencher N.A."/>
            <person name="Videira A."/>
            <person name="Krause F."/>
        </authorList>
    </citation>
    <scope>SUBUNIT</scope>
    <scope>IDENTIFICATION BY MASS SPECTROMETRY</scope>
</reference>
<reference key="11">
    <citation type="journal article" date="2009" name="Mol. Microbiol.">
        <title>Effects of mitochondrial complex III disruption in the respiratory chain of Neurospora crassa.</title>
        <authorList>
            <person name="Duarte M."/>
            <person name="Videira A."/>
        </authorList>
    </citation>
    <scope>FUNCTION OF COMPLEX III</scope>
    <scope>SUBUNIT</scope>
    <scope>DISRUPTION PHENOTYPE</scope>
</reference>
<protein>
    <recommendedName>
        <fullName>Cytochrome b-c1 complex subunit Rieske, mitochondrial</fullName>
        <ecNumber evidence="5 6 9">7.1.1.8</ecNumber>
    </recommendedName>
    <alternativeName>
        <fullName>Complex III subunit 5</fullName>
    </alternativeName>
    <alternativeName>
        <fullName evidence="13">Complex III subunit V</fullName>
    </alternativeName>
    <alternativeName>
        <fullName>Rieske iron-sulfur protein</fullName>
        <shortName>RISP</shortName>
    </alternativeName>
    <alternativeName>
        <fullName>Ubiquinol-cytochrome c oxidoreductase iron-sulfur subunit</fullName>
    </alternativeName>
    <alternativeName>
        <fullName>Ubiquinol-cytochrome c reductase complex 25 kDa protein</fullName>
    </alternativeName>
</protein>
<feature type="transit peptide" description="Mitochondrion" evidence="8">
    <location>
        <begin position="1"/>
        <end position="24"/>
    </location>
</feature>
<feature type="propeptide" id="PRO_0000449191" description="Removed in mature form" evidence="10">
    <location>
        <begin position="25"/>
        <end position="32"/>
    </location>
</feature>
<feature type="chain" id="PRO_0000030681" description="Cytochrome b-c1 complex subunit Rieske, mitochondrial">
    <location>
        <begin position="33"/>
        <end position="231"/>
    </location>
</feature>
<feature type="topological domain" description="Mitochondrial matrix" evidence="1">
    <location>
        <begin position="33"/>
        <end position="65"/>
    </location>
</feature>
<feature type="transmembrane region" description="Helical" evidence="1">
    <location>
        <begin position="66"/>
        <end position="95"/>
    </location>
</feature>
<feature type="topological domain" description="Mitochondrial intermembrane" evidence="1">
    <location>
        <begin position="96"/>
        <end position="231"/>
    </location>
</feature>
<feature type="domain" description="Rieske" evidence="2">
    <location>
        <begin position="134"/>
        <end position="229"/>
    </location>
</feature>
<feature type="binding site" evidence="2">
    <location>
        <position position="174"/>
    </location>
    <ligand>
        <name>[2Fe-2S] cluster</name>
        <dbReference type="ChEBI" id="CHEBI:190135"/>
    </ligand>
</feature>
<feature type="binding site" evidence="2">
    <location>
        <position position="176"/>
    </location>
    <ligand>
        <name>[2Fe-2S] cluster</name>
        <dbReference type="ChEBI" id="CHEBI:190135"/>
    </ligand>
</feature>
<feature type="binding site" evidence="2">
    <location>
        <position position="193"/>
    </location>
    <ligand>
        <name>[2Fe-2S] cluster</name>
        <dbReference type="ChEBI" id="CHEBI:190135"/>
    </ligand>
</feature>
<feature type="binding site" evidence="2">
    <location>
        <position position="196"/>
    </location>
    <ligand>
        <name>[2Fe-2S] cluster</name>
        <dbReference type="ChEBI" id="CHEBI:190135"/>
    </ligand>
</feature>
<feature type="disulfide bond" evidence="2">
    <location>
        <begin position="179"/>
        <end position="195"/>
    </location>
</feature>
<gene>
    <name type="primary">fes-1</name>
    <name type="ORF">NCU06606</name>
</gene>
<name>UCRI_NEUCR</name>
<organism>
    <name type="scientific">Neurospora crassa (strain ATCC 24698 / 74-OR23-1A / CBS 708.71 / DSM 1257 / FGSC 987)</name>
    <dbReference type="NCBI Taxonomy" id="367110"/>
    <lineage>
        <taxon>Eukaryota</taxon>
        <taxon>Fungi</taxon>
        <taxon>Dikarya</taxon>
        <taxon>Ascomycota</taxon>
        <taxon>Pezizomycotina</taxon>
        <taxon>Sordariomycetes</taxon>
        <taxon>Sordariomycetidae</taxon>
        <taxon>Sordariales</taxon>
        <taxon>Sordariaceae</taxon>
        <taxon>Neurospora</taxon>
    </lineage>
</organism>
<accession>P07056</accession>
<accession>Q7S9Q9</accession>
<evidence type="ECO:0000250" key="1">
    <source>
        <dbReference type="UniProtKB" id="P08067"/>
    </source>
</evidence>
<evidence type="ECO:0000255" key="2">
    <source>
        <dbReference type="PROSITE-ProRule" id="PRU00628"/>
    </source>
</evidence>
<evidence type="ECO:0000269" key="3">
    <source>
    </source>
</evidence>
<evidence type="ECO:0000269" key="4">
    <source>
    </source>
</evidence>
<evidence type="ECO:0000269" key="5">
    <source>
    </source>
</evidence>
<evidence type="ECO:0000269" key="6">
    <source>
    </source>
</evidence>
<evidence type="ECO:0000269" key="7">
    <source>
    </source>
</evidence>
<evidence type="ECO:0000269" key="8">
    <source>
    </source>
</evidence>
<evidence type="ECO:0000269" key="9">
    <source>
    </source>
</evidence>
<evidence type="ECO:0000269" key="10">
    <source>
    </source>
</evidence>
<evidence type="ECO:0000269" key="11">
    <source>
    </source>
</evidence>
<evidence type="ECO:0000269" key="12">
    <source>
    </source>
</evidence>
<evidence type="ECO:0000303" key="13">
    <source>
    </source>
</evidence>
<evidence type="ECO:0000305" key="14"/>
<evidence type="ECO:0000305" key="15">
    <source>
    </source>
</evidence>
<evidence type="ECO:0000305" key="16">
    <source>
    </source>
</evidence>
<keyword id="KW-0001">2Fe-2S</keyword>
<keyword id="KW-0903">Direct protein sequencing</keyword>
<keyword id="KW-1015">Disulfide bond</keyword>
<keyword id="KW-0249">Electron transport</keyword>
<keyword id="KW-0408">Iron</keyword>
<keyword id="KW-0411">Iron-sulfur</keyword>
<keyword id="KW-0472">Membrane</keyword>
<keyword id="KW-0479">Metal-binding</keyword>
<keyword id="KW-0496">Mitochondrion</keyword>
<keyword id="KW-0999">Mitochondrion inner membrane</keyword>
<keyword id="KW-1185">Reference proteome</keyword>
<keyword id="KW-0679">Respiratory chain</keyword>
<keyword id="KW-0809">Transit peptide</keyword>
<keyword id="KW-1278">Translocase</keyword>
<keyword id="KW-0812">Transmembrane</keyword>
<keyword id="KW-1133">Transmembrane helix</keyword>
<keyword id="KW-0813">Transport</keyword>
<dbReference type="EC" id="7.1.1.8" evidence="5 6 9"/>
<dbReference type="EMBL" id="X02472">
    <property type="protein sequence ID" value="CAA26308.1"/>
    <property type="molecule type" value="Genomic_DNA"/>
</dbReference>
<dbReference type="EMBL" id="CM002239">
    <property type="protein sequence ID" value="EAA33112.1"/>
    <property type="molecule type" value="Genomic_DNA"/>
</dbReference>
<dbReference type="PIR" id="A24612">
    <property type="entry name" value="RDNCUF"/>
</dbReference>
<dbReference type="RefSeq" id="XP_962348.1">
    <property type="nucleotide sequence ID" value="XM_957255.3"/>
</dbReference>
<dbReference type="SMR" id="P07056"/>
<dbReference type="FunCoup" id="P07056">
    <property type="interactions" value="773"/>
</dbReference>
<dbReference type="STRING" id="367110.P07056"/>
<dbReference type="PaxDb" id="5141-EFNCRP00000006347"/>
<dbReference type="EnsemblFungi" id="EAA33112">
    <property type="protein sequence ID" value="EAA33112"/>
    <property type="gene ID" value="NCU06606"/>
</dbReference>
<dbReference type="GeneID" id="3878496"/>
<dbReference type="KEGG" id="ncr:NCU06606"/>
<dbReference type="VEuPathDB" id="FungiDB:NCU06606"/>
<dbReference type="HOGENOM" id="CLU_055690_0_0_1"/>
<dbReference type="InParanoid" id="P07056"/>
<dbReference type="OMA" id="KRTWLIA"/>
<dbReference type="OrthoDB" id="1637982at2759"/>
<dbReference type="Proteomes" id="UP000001805">
    <property type="component" value="Chromosome 4, Linkage Group IV"/>
</dbReference>
<dbReference type="GO" id="GO:0005743">
    <property type="term" value="C:mitochondrial inner membrane"/>
    <property type="evidence" value="ECO:0007669"/>
    <property type="project" value="UniProtKB-SubCell"/>
</dbReference>
<dbReference type="GO" id="GO:0045275">
    <property type="term" value="C:respiratory chain complex III"/>
    <property type="evidence" value="ECO:0000318"/>
    <property type="project" value="GO_Central"/>
</dbReference>
<dbReference type="GO" id="GO:0051537">
    <property type="term" value="F:2 iron, 2 sulfur cluster binding"/>
    <property type="evidence" value="ECO:0007669"/>
    <property type="project" value="UniProtKB-KW"/>
</dbReference>
<dbReference type="GO" id="GO:0046872">
    <property type="term" value="F:metal ion binding"/>
    <property type="evidence" value="ECO:0007669"/>
    <property type="project" value="UniProtKB-KW"/>
</dbReference>
<dbReference type="GO" id="GO:0016491">
    <property type="term" value="F:oxidoreductase activity"/>
    <property type="evidence" value="ECO:0000318"/>
    <property type="project" value="GO_Central"/>
</dbReference>
<dbReference type="GO" id="GO:0008121">
    <property type="term" value="F:ubiquinol-cytochrome-c reductase activity"/>
    <property type="evidence" value="ECO:0007669"/>
    <property type="project" value="UniProtKB-EC"/>
</dbReference>
<dbReference type="GO" id="GO:0006122">
    <property type="term" value="P:mitochondrial electron transport, ubiquinol to cytochrome c"/>
    <property type="evidence" value="ECO:0000318"/>
    <property type="project" value="GO_Central"/>
</dbReference>
<dbReference type="CDD" id="cd03470">
    <property type="entry name" value="Rieske_cytochrome_bc1"/>
    <property type="match status" value="1"/>
</dbReference>
<dbReference type="FunFam" id="1.20.5.270:FF:000002">
    <property type="entry name" value="Cytochrome b-c1 complex subunit Rieske, mitochondrial"/>
    <property type="match status" value="1"/>
</dbReference>
<dbReference type="FunFam" id="2.102.10.10:FF:000001">
    <property type="entry name" value="Cytochrome b-c1 complex subunit Rieske, mitochondrial"/>
    <property type="match status" value="1"/>
</dbReference>
<dbReference type="Gene3D" id="2.102.10.10">
    <property type="entry name" value="Rieske [2Fe-2S] iron-sulphur domain"/>
    <property type="match status" value="1"/>
</dbReference>
<dbReference type="Gene3D" id="1.20.5.270">
    <property type="entry name" value="Ubiquinol cytochrome reductase, transmembrane domain"/>
    <property type="match status" value="1"/>
</dbReference>
<dbReference type="InterPro" id="IPR037008">
    <property type="entry name" value="bc1_Rieske_TM_sf"/>
</dbReference>
<dbReference type="InterPro" id="IPR017941">
    <property type="entry name" value="Rieske_2Fe-2S"/>
</dbReference>
<dbReference type="InterPro" id="IPR036922">
    <property type="entry name" value="Rieske_2Fe-2S_sf"/>
</dbReference>
<dbReference type="InterPro" id="IPR014349">
    <property type="entry name" value="Rieske_Fe-S_prot"/>
</dbReference>
<dbReference type="InterPro" id="IPR005805">
    <property type="entry name" value="Rieske_Fe-S_prot_C"/>
</dbReference>
<dbReference type="InterPro" id="IPR004192">
    <property type="entry name" value="Rieske_TM"/>
</dbReference>
<dbReference type="InterPro" id="IPR006317">
    <property type="entry name" value="Ubiquinol_cyt_c_Rdtase_Fe-S-su"/>
</dbReference>
<dbReference type="NCBIfam" id="TIGR01416">
    <property type="entry name" value="Rieske_proteo"/>
    <property type="match status" value="1"/>
</dbReference>
<dbReference type="PANTHER" id="PTHR10134">
    <property type="entry name" value="CYTOCHROME B-C1 COMPLEX SUBUNIT RIESKE, MITOCHONDRIAL"/>
    <property type="match status" value="1"/>
</dbReference>
<dbReference type="Pfam" id="PF00355">
    <property type="entry name" value="Rieske"/>
    <property type="match status" value="1"/>
</dbReference>
<dbReference type="Pfam" id="PF02921">
    <property type="entry name" value="UCR_TM"/>
    <property type="match status" value="1"/>
</dbReference>
<dbReference type="PRINTS" id="PR00162">
    <property type="entry name" value="RIESKE"/>
</dbReference>
<dbReference type="SUPFAM" id="SSF50022">
    <property type="entry name" value="ISP domain"/>
    <property type="match status" value="1"/>
</dbReference>
<dbReference type="SUPFAM" id="SSF81502">
    <property type="entry name" value="ISP transmembrane anchor"/>
    <property type="match status" value="1"/>
</dbReference>
<dbReference type="PROSITE" id="PS51296">
    <property type="entry name" value="RIESKE"/>
    <property type="match status" value="1"/>
</dbReference>
<sequence>MAPVSIVSRAAMRAAAAPARAVRALTTSTALQGSSSSTFESPFKGESKAAKVPDFGKYMSKAPPSTNMLFSYFMVGTMGAITAAGAKSTIQEFLKNMSASADVLAMAKVEVDLNAIPEGKNVIIKWRGKPVFIRHRTPAEIEEANKVNVATLRDPETDADRVKKPEWLVMLGVCTHLGCVPIGEAGDYGGWFCPCHGSHYDISGRIRKGPAPLNLEIPLYEFPEEGKLVIG</sequence>
<comment type="function">
    <text evidence="1 9 15 16">Component of the ubiquinol-cytochrome c oxidoreductase, a multisubunit transmembrane complex that is part of the mitochondrial electron transport chain which drives oxidative phosphorylation. The respiratory chain contains 3 multisubunit complexes succinate dehydrogenase (complex II, CII), ubiquinol-cytochrome c oxidoreductase (cytochrome b-c1 complex, complex III, CIII) and cytochrome c oxidase (complex IV, CIV), that cooperate to transfer electrons derived from NADH and succinate to molecular oxygen, creating an electrochemical gradient over the inner membrane that drives transmembrane transport and the ATP synthase. The cytochrome b-c1 complex catalyzes electron transfer from ubiquinol to cytochrome c, linking this redox reaction to translocation of protons across the mitochondrial inner membrane, with protons being carried across the membrane as hydrogens on the quinol. In the process called Q cycle, 2 protons are consumed from the matrix, 4 protons are released into the intermembrane space and 2 electrons are passed to cytochrome c (Probable) (PubMed:3015618). The Rieske protein is a catalytic core subunit containing a [2Fe-2S] iron-sulfur cluster. It cycles between 2 conformational states during catalysis to transfer electrons from the quinol bound in the Q(0) site in cytochrome b to cytochrome c1 (By similarity).</text>
</comment>
<comment type="catalytic activity">
    <reaction evidence="5 6 9">
        <text>a quinol + 2 Fe(III)-[cytochrome c](out) = a quinone + 2 Fe(II)-[cytochrome c](out) + 2 H(+)(out)</text>
        <dbReference type="Rhea" id="RHEA:11484"/>
        <dbReference type="Rhea" id="RHEA-COMP:10350"/>
        <dbReference type="Rhea" id="RHEA-COMP:14399"/>
        <dbReference type="ChEBI" id="CHEBI:15378"/>
        <dbReference type="ChEBI" id="CHEBI:24646"/>
        <dbReference type="ChEBI" id="CHEBI:29033"/>
        <dbReference type="ChEBI" id="CHEBI:29034"/>
        <dbReference type="ChEBI" id="CHEBI:132124"/>
        <dbReference type="EC" id="7.1.1.8"/>
    </reaction>
</comment>
<comment type="cofactor">
    <cofactor evidence="2">
        <name>[2Fe-2S] cluster</name>
        <dbReference type="ChEBI" id="CHEBI:190135"/>
    </cofactor>
    <text evidence="2">Binds 1 [2Fe-2S] cluster per subunit.</text>
</comment>
<comment type="subunit">
    <text evidence="3 4 6 7 11 12">Component of the ubiquinol-cytochrome c oxidoreductase (cytochrome b-c1 complex, complex III, CIII), a multisubunit enzyme composed of 10 subunits. The complex is composed of 3 respiratory subunits cytochrome b (cob), cytochrome c1 (cyt-1) and Rieske protein (fes-1), 2 core protein subunits pep and ucr-1, and 5 low-molecular weight protein subunits qcr6, qcr7, qcr8, qcr9 and probably NCU16844/qcr10 (PubMed:18251112, PubMed:226365, PubMed:6273583, PubMed:6302289). The complex exists as an obligatory dimer and forms supercomplexes (SCs) in the inner mitochondrial membrane with NADH-ubiquinone oxidoreductase (complex I, CI) and cytochrome c oxidase (complex IV, CIV), resulting in different assemblies (supercomplexes SCI(1)III(2), SCIII(2)IV(1) and SCIII(2)IV(2) as well as higher order I(x)III(y)IV(z) megacomplexes) (PubMed:17873079, PubMed:19239619).</text>
</comment>
<comment type="subcellular location">
    <subcellularLocation>
        <location evidence="7">Mitochondrion inner membrane</location>
        <topology evidence="1">Single-pass membrane protein</topology>
    </subcellularLocation>
</comment>
<comment type="PTM">
    <text evidence="10">Processed by both the mitochondrial processing peptidase (MPP) and the mitochondrial intermediate protease (MIP). Initially, MPP removes 25 amino acids from the newly imported precursor in the mitochondrial matrix. This proteolytic processing is then followed by a second proteolytic cleavage by MIP, which removes an octapeptide to generate mature-sized Rieske protein.</text>
</comment>
<comment type="disruption phenotype">
    <text evidence="6">Mutants display reduced growth, are female sterile and lack active complex III.</text>
</comment>
<comment type="miscellaneous">
    <text>The Rieske protein is a high potential 2Fe-2S protein.</text>
</comment>
<comment type="similarity">
    <text evidence="14">Belongs to the Rieske iron-sulfur protein family.</text>
</comment>
<proteinExistence type="evidence at protein level"/>